<dbReference type="EC" id="2.7.7.48" evidence="2"/>
<dbReference type="EC" id="3.1.-.-" evidence="2"/>
<dbReference type="EMBL" id="DQ375405">
    <property type="protein sequence ID" value="ABD51509.1"/>
    <property type="molecule type" value="Genomic_RNA"/>
</dbReference>
<dbReference type="EMBL" id="DQ375406">
    <property type="protein sequence ID" value="ABD51510.1"/>
    <property type="molecule type" value="Genomic_RNA"/>
</dbReference>
<dbReference type="EMBL" id="DQ375407">
    <property type="protein sequence ID" value="ABD51511.1"/>
    <property type="molecule type" value="Genomic_RNA"/>
</dbReference>
<dbReference type="EMBL" id="DQ375408">
    <property type="protein sequence ID" value="ABD51512.1"/>
    <property type="molecule type" value="Genomic_RNA"/>
</dbReference>
<dbReference type="EMBL" id="HM586957">
    <property type="protein sequence ID" value="AEB20480.1"/>
    <property type="molecule type" value="Genomic_RNA"/>
</dbReference>
<dbReference type="PDB" id="6QHG">
    <property type="method" value="X-ray"/>
    <property type="resolution" value="1.48 A"/>
    <property type="chains" value="A/B=1706-1822"/>
</dbReference>
<dbReference type="PDBsum" id="6QHG"/>
<dbReference type="EMDB" id="EMD-31077"/>
<dbReference type="SMR" id="A2SZS3"/>
<dbReference type="Proteomes" id="UP000105929">
    <property type="component" value="Genome"/>
</dbReference>
<dbReference type="Proteomes" id="UP000136639">
    <property type="component" value="Genome"/>
</dbReference>
<dbReference type="Proteomes" id="UP000150713">
    <property type="component" value="Genome"/>
</dbReference>
<dbReference type="GO" id="GO:0044165">
    <property type="term" value="C:host cell endoplasmic reticulum"/>
    <property type="evidence" value="ECO:0007669"/>
    <property type="project" value="UniProtKB-SubCell"/>
</dbReference>
<dbReference type="GO" id="GO:0044172">
    <property type="term" value="C:host cell endoplasmic reticulum-Golgi intermediate compartment"/>
    <property type="evidence" value="ECO:0007669"/>
    <property type="project" value="UniProtKB-SubCell"/>
</dbReference>
<dbReference type="GO" id="GO:0044177">
    <property type="term" value="C:host cell Golgi apparatus"/>
    <property type="evidence" value="ECO:0007669"/>
    <property type="project" value="UniProtKB-SubCell"/>
</dbReference>
<dbReference type="GO" id="GO:0044423">
    <property type="term" value="C:virion component"/>
    <property type="evidence" value="ECO:0007669"/>
    <property type="project" value="UniProtKB-KW"/>
</dbReference>
<dbReference type="GO" id="GO:0016787">
    <property type="term" value="F:hydrolase activity"/>
    <property type="evidence" value="ECO:0007669"/>
    <property type="project" value="UniProtKB-KW"/>
</dbReference>
<dbReference type="GO" id="GO:0046872">
    <property type="term" value="F:metal ion binding"/>
    <property type="evidence" value="ECO:0007669"/>
    <property type="project" value="UniProtKB-KW"/>
</dbReference>
<dbReference type="GO" id="GO:0001882">
    <property type="term" value="F:nucleoside binding"/>
    <property type="evidence" value="ECO:0007669"/>
    <property type="project" value="InterPro"/>
</dbReference>
<dbReference type="GO" id="GO:0003968">
    <property type="term" value="F:RNA-directed RNA polymerase activity"/>
    <property type="evidence" value="ECO:0007669"/>
    <property type="project" value="UniProtKB-EC"/>
</dbReference>
<dbReference type="GO" id="GO:0006351">
    <property type="term" value="P:DNA-templated transcription"/>
    <property type="evidence" value="ECO:0007669"/>
    <property type="project" value="InterPro"/>
</dbReference>
<dbReference type="GO" id="GO:0039694">
    <property type="term" value="P:viral RNA genome replication"/>
    <property type="evidence" value="ECO:0007669"/>
    <property type="project" value="InterPro"/>
</dbReference>
<dbReference type="InterPro" id="IPR022531">
    <property type="entry name" value="L_PA-C-like"/>
</dbReference>
<dbReference type="InterPro" id="IPR029124">
    <property type="entry name" value="L_protein_N"/>
</dbReference>
<dbReference type="InterPro" id="IPR007099">
    <property type="entry name" value="RNA-dir_pol_NSvirus"/>
</dbReference>
<dbReference type="InterPro" id="IPR014385">
    <property type="entry name" value="RNA-dir_pol_phlebovirus"/>
</dbReference>
<dbReference type="InterPro" id="IPR007322">
    <property type="entry name" value="RNA_pol_bunyavir"/>
</dbReference>
<dbReference type="Pfam" id="PF04196">
    <property type="entry name" value="Bunya_RdRp"/>
    <property type="match status" value="1"/>
</dbReference>
<dbReference type="Pfam" id="PF12603">
    <property type="entry name" value="L_PA-C-like"/>
    <property type="match status" value="1"/>
</dbReference>
<dbReference type="Pfam" id="PF15518">
    <property type="entry name" value="L_protein_N"/>
    <property type="match status" value="1"/>
</dbReference>
<dbReference type="PIRSF" id="PIRSF000826">
    <property type="entry name" value="L_PhleboV"/>
    <property type="match status" value="1"/>
</dbReference>
<dbReference type="PROSITE" id="PS50525">
    <property type="entry name" value="RDRP_SSRNA_NEG_SEG"/>
    <property type="match status" value="1"/>
</dbReference>
<sequence>MDSILSKQLVDKTGFVRVPIKHFDCTMLTLALPTFDVSKMVDRITIDFNLDDIQGASEIGSTLLPSMSIDVEDMANFVHDFTFGHLADKTDRLLMREFPMMNDGFDHLSPDMIIKTTSGMYNIVEFTTFRGDERGAFQAAMTKLAKYEVPCENRSQGRTVVLYVVSAYRHGVWSNLELEDSEAEEMVYRYRLALSVMDELRTLFPELSSTDEELGKTERELLAMVSSIQINWSVTESVFPPFSREMFDRFRSSPPDSEYITRIVSRCLINSQEKLINSSFFAEGNDKALRFSKNAEECSLAVERALNQYRAEDNLRDLNDHKSTIQLPPWLSYHDVDGKDLCPLQGLDVRGDHPMCNLWREVVTSANLEEIERMHDDAAAELEFALSGVKDRPDERNRYHRVHLNMGSDDSVYIAALGVNGKKHKADTLVQQMRDRSKQPFSPDHDVDHISEFLSACSSDLWATDEDLYNPLSCDKELRLAAQRIHQPSLSERGFNEIITEHYKFMGSRIGSWCQMVSLIGAELSASVKQHVKPNYFVIKRLLGSGIFLLIKPTSSKSHIFVSFAIKRSCWAFDLSTSRVFKPYIDAGDLLVTDFVSYKLSKLTNLCKCVSLMESSFSFWAEAFGIPSWNFVGDLFRSSDSAAMDASYMGKLSLLTLLEDKAATEELQTIARYIIMEGFVSPPEIPKPHKMTSKFPKVLRSELQVYLLNCLCRTIQRIAGEPFILKKKDGSISWGGMFNPFSGRPLLDMQPLISCCYNGYFKNKEEETEPSSLSGMYKKIIELEHLRPQSDAFLGYKDPELPRMHEFSVSYLKEACNHAKLVLRSLYGQNFMEQIDNQIIRELSGLTLERLATLKATSNFNENWYVYKDVADKNYTRDKLLVKMSKYASEGKSLAIQKFEDCMRQIESQGCMHICLFKKQQHGGLREIYVMGAEERIVQSVVETIARSIGKFFASDTLCNPPNKVKIPETHGIRARKQCKGPVWTCATSDDARKWNQGHFVTKFALMLCEFTSPKWWPLIIRGCSMFTRKRMMMNLNYLKILDGHRELDIRDDFVMDLFKAYHGEAEVPWAFKGKTYLETTTGMMQGILHYTSSLLHTIHQEYIRSLSFKIFNLKVAPEMSKGLVCDMMQGSDDSSMLISFPADDEKVLTRCKVAAAICFRMKKELGVYLAIYPSEKSTANTDFVMEYNSEFYFHTQHVRPTIRWIAACCSLPEVETLVARQEEASNLMTSVTEGGGSFSLAAMIQQAQCTLHYMLMGMGVSELFLEYKKAVLKWNDPGLGFFLLDNPYACGLGGFRFNLFKAITRTDLQKLYAFFMKKVKGSAARDWADEDVTIPETCSVSPGGALILSSSLKWGSRKKFQKLRDRLNIPENWIELINENPEVLYRAPRTGPEILLRIAEKVHSPGVVSSLSSGNAVCKVMASAVYFLSATIFEDTGRPEFNFLEDSKYSLLQKMAAYSGFHGFNDMEPEDILFLFPNIEELESLDSIVYNKGEIDIIPRVNIRDATQTRVTIFNEQKTLRTSPEKLVSDKWFGTQKSRIGKTTFLAEWEKLKKIVKWLEDTPEATLAHTPLNNHIQVRNFFARMESKPRTVRITGAPVKKRSGVSKIAMVIRDNFSRMGHLRGVEDLAGFTRSVSAEILKHFLFCILQGPYSESYKLQLIYRVLSSVSNVEIKESDGKTKTNLIGILQRFLDGDHVVPIIEEMGAGTVGGFIKRQQSKVVQNKVVYYGVGIWRGFMDGYQVHLEIENDIGQPPRLRNVTTNCQSSPWDLSIPIRQWAEDMGVTNNQDYSSKSSRGARYWMHSFRMQGPSKPFGCPVYIIKGDMSDVIRLRKEEVEMKVRGSTLNLYTKHHSHQDLHILSYTASDNDLSPGIFKSISDEGVAQALQLFEREPSNCWVRCESVAPKFISAILEICEGKRQIRGINRTRLSEIVRICSESSLRSKVGSMFSFVANVEEAHDVDYDALMDLMIEDAKNNAFSHVVDCIELDVSGPYEMESFDTSDVNLFGPAHYKDISSLSMIAHPLMDKFVDYAISKMGRASVRKVLETGRCSSKDYDLSKVLFRTLQRPEESIRIDDLELYEETDVADDMLG</sequence>
<accession>A2SZS3</accession>
<accession>A2SZS6</accession>
<accession>F4ZDJ0</accession>
<organismHost>
    <name type="scientific">Aedes</name>
    <dbReference type="NCBI Taxonomy" id="7158"/>
</organismHost>
<organismHost>
    <name type="scientific">Bos taurus</name>
    <name type="common">Bovine</name>
    <dbReference type="NCBI Taxonomy" id="9913"/>
</organismHost>
<organismHost>
    <name type="scientific">Bos taurus x Bison bison</name>
    <name type="common">beefalo</name>
    <dbReference type="NCBI Taxonomy" id="297284"/>
</organismHost>
<organismHost>
    <name type="scientific">Camelus bactrianus</name>
    <name type="common">Bactrian camel</name>
    <dbReference type="NCBI Taxonomy" id="9837"/>
</organismHost>
<organismHost>
    <name type="scientific">Capra hircus</name>
    <name type="common">Goat</name>
    <dbReference type="NCBI Taxonomy" id="9925"/>
</organismHost>
<organismHost>
    <name type="scientific">Homo sapiens</name>
    <name type="common">Human</name>
    <dbReference type="NCBI Taxonomy" id="9606"/>
</organismHost>
<organismHost>
    <name type="scientific">Ovis aries</name>
    <name type="common">Sheep</name>
    <dbReference type="NCBI Taxonomy" id="9940"/>
</organismHost>
<organismHost>
    <name type="scientific">Phlebotomus papatasi</name>
    <name type="common">Sandfly</name>
    <dbReference type="NCBI Taxonomy" id="29031"/>
</organismHost>
<evidence type="ECO:0000250" key="1">
    <source>
        <dbReference type="UniProtKB" id="A5HC98"/>
    </source>
</evidence>
<evidence type="ECO:0000250" key="2">
    <source>
        <dbReference type="UniProtKB" id="I0DF35"/>
    </source>
</evidence>
<evidence type="ECO:0000250" key="3">
    <source>
        <dbReference type="UniProtKB" id="P20470"/>
    </source>
</evidence>
<evidence type="ECO:0000250" key="4">
    <source>
        <dbReference type="UniProtKB" id="P27316"/>
    </source>
</evidence>
<evidence type="ECO:0000255" key="5">
    <source>
        <dbReference type="PROSITE-ProRule" id="PRU00539"/>
    </source>
</evidence>
<evidence type="ECO:0000269" key="6">
    <source>
    </source>
</evidence>
<evidence type="ECO:0000269" key="7">
    <source>
    </source>
</evidence>
<evidence type="ECO:0000303" key="8">
    <source>
    </source>
</evidence>
<evidence type="ECO:0000305" key="9"/>
<evidence type="ECO:0000312" key="10">
    <source>
        <dbReference type="EMBL" id="ABD51509.1"/>
    </source>
</evidence>
<evidence type="ECO:0000312" key="11">
    <source>
        <dbReference type="EMBL" id="ABD51510.1"/>
    </source>
</evidence>
<evidence type="ECO:0000312" key="12">
    <source>
        <dbReference type="EMBL" id="ABD51511.1"/>
    </source>
</evidence>
<evidence type="ECO:0000312" key="13">
    <source>
        <dbReference type="EMBL" id="AEB20480.1"/>
    </source>
</evidence>
<evidence type="ECO:0007744" key="14">
    <source>
        <dbReference type="PDB" id="6QHG"/>
    </source>
</evidence>
<evidence type="ECO:0007829" key="15">
    <source>
        <dbReference type="PDB" id="6QHG"/>
    </source>
</evidence>
<organism>
    <name type="scientific">Rift valley fever virus</name>
    <name type="common">RVFV</name>
    <dbReference type="NCBI Taxonomy" id="11588"/>
    <lineage>
        <taxon>Viruses</taxon>
        <taxon>Riboviria</taxon>
        <taxon>Orthornavirae</taxon>
        <taxon>Negarnaviricota</taxon>
        <taxon>Polyploviricotina</taxon>
        <taxon>Ellioviricetes</taxon>
        <taxon>Bunyavirales</taxon>
        <taxon>Phenuiviridae</taxon>
        <taxon>Phlebovirus</taxon>
        <taxon>Phlebovirus riftense</taxon>
    </lineage>
</organism>
<proteinExistence type="evidence at protein level"/>
<feature type="chain" id="PRO_0000456058" description="RNA-directed RNA polymerase L">
    <location>
        <begin position="1"/>
        <end position="2092"/>
    </location>
</feature>
<feature type="domain" description="RdRp catalytic" evidence="5">
    <location>
        <begin position="975"/>
        <end position="1166"/>
    </location>
</feature>
<feature type="region of interest" description="Endonuclease" evidence="1">
    <location>
        <begin position="18"/>
        <end position="215"/>
    </location>
</feature>
<feature type="region of interest" description="Cap-binding" evidence="1">
    <location>
        <begin position="1706"/>
        <end position="1822"/>
    </location>
</feature>
<feature type="active site" description="For endonuclease activity" evidence="2">
    <location>
        <position position="143"/>
    </location>
</feature>
<feature type="binding site" evidence="1">
    <location>
        <position position="79"/>
    </location>
    <ligand>
        <name>Mn(2+)</name>
        <dbReference type="ChEBI" id="CHEBI:29035"/>
        <label>1</label>
    </ligand>
</feature>
<feature type="binding site" evidence="1">
    <location>
        <position position="111"/>
    </location>
    <ligand>
        <name>Mn(2+)</name>
        <dbReference type="ChEBI" id="CHEBI:29035"/>
        <label>1</label>
    </ligand>
</feature>
<feature type="binding site" evidence="1">
    <location>
        <position position="111"/>
    </location>
    <ligand>
        <name>Mn(2+)</name>
        <dbReference type="ChEBI" id="CHEBI:29035"/>
        <label>2</label>
    </ligand>
</feature>
<feature type="binding site" evidence="1">
    <location>
        <position position="125"/>
    </location>
    <ligand>
        <name>Mn(2+)</name>
        <dbReference type="ChEBI" id="CHEBI:29035"/>
        <label>1</label>
    </ligand>
</feature>
<feature type="binding site" evidence="2">
    <location>
        <position position="1134"/>
    </location>
    <ligand>
        <name>Mg(2+)</name>
        <dbReference type="ChEBI" id="CHEBI:18420"/>
        <note>catalytic; for RdRp activity</note>
    </ligand>
</feature>
<feature type="site" description="Interaction with the cap substrate" evidence="6">
    <location>
        <position position="1713"/>
    </location>
</feature>
<feature type="site" description="Interaction with the cap substrate" evidence="6">
    <location>
        <position position="1716"/>
    </location>
</feature>
<feature type="site" description="Interaction with the cap substrate" evidence="6">
    <location>
        <position position="1717"/>
    </location>
</feature>
<feature type="site" description="Interaction with the cap substrate" evidence="6">
    <location>
        <position position="1728"/>
    </location>
</feature>
<feature type="site" description="Interaction with the cap substrate" evidence="6">
    <location>
        <position position="1782"/>
    </location>
</feature>
<feature type="sequence conflict" description="In Ref. 4; AEB20480." evidence="9" ref="4">
    <original>F</original>
    <variation>Y</variation>
    <location>
        <position position="23"/>
    </location>
</feature>
<feature type="sequence conflict" description="In Ref. 3; ABD51512." evidence="9" ref="3">
    <original>I</original>
    <variation>V</variation>
    <location>
        <position position="59"/>
    </location>
</feature>
<feature type="sequence conflict" description="In Ref. 4; AEB20480." evidence="9" ref="4">
    <original>R</original>
    <variation>K</variation>
    <location>
        <position position="249"/>
    </location>
</feature>
<feature type="sequence conflict" description="In Ref. 4; AEB20480." evidence="9" ref="4">
    <original>S</original>
    <variation>N</variation>
    <location>
        <position position="278"/>
    </location>
</feature>
<feature type="sequence conflict" description="In Ref. 4; AEB20480." evidence="9" ref="4">
    <original>A</original>
    <variation>V</variation>
    <location>
        <position position="288"/>
    </location>
</feature>
<feature type="sequence conflict" description="In Ref. 4; AEB20480." evidence="9" ref="4">
    <original>LAV</original>
    <variation>SAI</variation>
    <location>
        <begin position="300"/>
        <end position="302"/>
    </location>
</feature>
<feature type="sequence conflict" description="In Ref. 3; ABD51512." evidence="9" ref="3">
    <original>A</original>
    <variation>D</variation>
    <location>
        <position position="305"/>
    </location>
</feature>
<feature type="sequence conflict" description="In Ref. 4; AEB20480." evidence="9" ref="4">
    <original>V</original>
    <variation>I</variation>
    <location>
        <position position="349"/>
    </location>
</feature>
<feature type="sequence conflict" description="In Ref. 4; AEB20480." evidence="9" ref="4">
    <original>D</original>
    <variation>N</variation>
    <location>
        <position position="435"/>
    </location>
</feature>
<feature type="sequence conflict" description="In Ref. 4; AEB20480." evidence="9" ref="4">
    <original>P</original>
    <variation>L</variation>
    <location>
        <position position="440"/>
    </location>
</feature>
<feature type="sequence conflict" description="In Ref. 4; AEB20480." evidence="9" ref="4">
    <original>D</original>
    <variation>N</variation>
    <location>
        <position position="446"/>
    </location>
</feature>
<feature type="sequence conflict" description="In Ref. 4; AEB20480." evidence="9" ref="4">
    <original>R</original>
    <variation>K</variation>
    <location>
        <position position="493"/>
    </location>
</feature>
<feature type="sequence conflict" description="In Ref. 4; AEB20480." evidence="9" ref="4">
    <original>T</original>
    <variation>R</variation>
    <location>
        <position position="593"/>
    </location>
</feature>
<feature type="sequence conflict" description="In Ref. 4; AEB20480." evidence="9" ref="4">
    <original>A</original>
    <variation>T</variation>
    <location>
        <position position="663"/>
    </location>
</feature>
<feature type="sequence conflict" description="In Ref. 4; AEB20480." evidence="9" ref="4">
    <original>G</original>
    <variation>S</variation>
    <location>
        <position position="1123"/>
    </location>
</feature>
<feature type="sequence conflict" description="In Ref. 4; AEB20480." evidence="9" ref="4">
    <original>V</original>
    <variation>I</variation>
    <location>
        <position position="1333"/>
    </location>
</feature>
<feature type="sequence conflict" description="In Ref. 4; AEB20480." evidence="9" ref="4">
    <original>R</original>
    <variation>K</variation>
    <location>
        <position position="1922"/>
    </location>
</feature>
<feature type="sequence conflict" description="In Ref. 4; AEB20480." evidence="9" ref="4">
    <original>D</original>
    <variation>N</variation>
    <location>
        <position position="1984"/>
    </location>
</feature>
<feature type="sequence conflict" description="In Ref. 4; AEB20480." evidence="9" ref="4">
    <original>T</original>
    <variation>A</variation>
    <location>
        <position position="2001"/>
    </location>
</feature>
<feature type="turn" evidence="15">
    <location>
        <begin position="1706"/>
        <end position="1708"/>
    </location>
</feature>
<feature type="strand" evidence="15">
    <location>
        <begin position="1710"/>
        <end position="1715"/>
    </location>
</feature>
<feature type="strand" evidence="15">
    <location>
        <begin position="1718"/>
        <end position="1722"/>
    </location>
</feature>
<feature type="strand" evidence="15">
    <location>
        <begin position="1725"/>
        <end position="1738"/>
    </location>
</feature>
<feature type="strand" evidence="15">
    <location>
        <begin position="1741"/>
        <end position="1749"/>
    </location>
</feature>
<feature type="strand" evidence="15">
    <location>
        <begin position="1756"/>
        <end position="1763"/>
    </location>
</feature>
<feature type="helix" evidence="15">
    <location>
        <begin position="1768"/>
        <end position="1771"/>
    </location>
</feature>
<feature type="helix" evidence="15">
    <location>
        <begin position="1772"/>
        <end position="1782"/>
    </location>
</feature>
<feature type="strand" evidence="15">
    <location>
        <begin position="1800"/>
        <end position="1803"/>
    </location>
</feature>
<feature type="strand" evidence="15">
    <location>
        <begin position="1806"/>
        <end position="1808"/>
    </location>
</feature>
<feature type="strand" evidence="15">
    <location>
        <begin position="1815"/>
        <end position="1820"/>
    </location>
</feature>
<comment type="function">
    <text evidence="1 2 9">RNA-dependent RNA polymerase, which is responsible for the replication and transcription of the viral RNA genome using antigenomic RNA as an intermediate (Probable). During transcription, synthesizes subgenomic RNAs and assures their capping by a cap-snatching mechanism, which involves the endonuclease activity cleaving the host capped pre-mRNAs (By similarity). These short capped RNAs are then used as primers for viral transcription. The 3'-end of subgenomic mRNAs molecules are not polyadenylated. During replication, the polymerase binds the 5' and 3' vRNA extremities at distinct sites (By similarity). In turn, significant conformational changes occur in the polymerase and in vRNA to initiate active RNA synthesis (By similarity). As a consequence of the use of the same enzyme for both transcription and replication, these mechanisms need to be well coordinated (By similarity).</text>
</comment>
<comment type="catalytic activity">
    <reaction evidence="5">
        <text>RNA(n) + a ribonucleoside 5'-triphosphate = RNA(n+1) + diphosphate</text>
        <dbReference type="Rhea" id="RHEA:21248"/>
        <dbReference type="Rhea" id="RHEA-COMP:14527"/>
        <dbReference type="Rhea" id="RHEA-COMP:17342"/>
        <dbReference type="ChEBI" id="CHEBI:33019"/>
        <dbReference type="ChEBI" id="CHEBI:61557"/>
        <dbReference type="ChEBI" id="CHEBI:140395"/>
        <dbReference type="EC" id="2.7.7.48"/>
    </reaction>
</comment>
<comment type="cofactor">
    <cofactor evidence="1">
        <name>Mn(2+)</name>
        <dbReference type="ChEBI" id="CHEBI:29035"/>
    </cofactor>
    <text evidence="1 7">For endonuclease activity. Binds 2 Mn(2+) ions in the active site (By similarity). The divalent metal ions are crucial for catalytic activity (PubMed:31948728).</text>
</comment>
<comment type="cofactor">
    <cofactor evidence="2">
        <name>Mg(2+)</name>
        <dbReference type="ChEBI" id="CHEBI:18420"/>
    </cofactor>
    <cofactor evidence="2">
        <name>Mn(2+)</name>
        <dbReference type="ChEBI" id="CHEBI:29035"/>
    </cofactor>
    <text evidence="2">For polymerase activity. Initiation activity is stronger in the presence of Mn(2+) than in the presence of Mg(2+).</text>
</comment>
<comment type="subunit">
    <text evidence="4">Homomultimer (By similarity). Interacts with glycoprotein N; this interaction allows efficient polymerase packaging into virus particles (By similarity). Interacts with nucleoprotein N (By similarity).</text>
</comment>
<comment type="subcellular location">
    <subcellularLocation>
        <location evidence="2">Host Golgi apparatus</location>
    </subcellularLocation>
    <subcellularLocation>
        <location evidence="2">Host endoplasmic reticulum</location>
    </subcellularLocation>
    <subcellularLocation>
        <location evidence="2">Host endoplasmic reticulum-Golgi intermediate compartment</location>
    </subcellularLocation>
    <subcellularLocation>
        <location evidence="3">Virion</location>
    </subcellularLocation>
</comment>
<comment type="domain">
    <text evidence="1 2 6">The N-terminus contains the endonuclease activity (endoN) (By similarity). The central region contains the RdRp activity (By similarity). The C-terminus contains the cap-binding region (PubMed:31136637).</text>
</comment>
<comment type="miscellaneous">
    <text evidence="8">Classified as His(+) endonuclease since it has a histidine upstream of the active site that coordinates the first cation.</text>
</comment>
<comment type="similarity">
    <text evidence="9">Belongs to the Bunyavirales RNA polymerase family.</text>
</comment>
<reference key="1">
    <citation type="submission" date="2006-01" db="EMBL/GenBank/DDBJ databases">
        <title>Rift Valley fever genomics.</title>
        <authorList>
            <person name="Bird B.H."/>
            <person name="Khristova M.L."/>
            <person name="Nichol S.T."/>
        </authorList>
    </citation>
    <scope>NUCLEOTIDE SEQUENCE [GENOMIC RNA]</scope>
    <source>
        <strain evidence="10">T-46</strain>
        <strain evidence="12">T1</strain>
    </source>
</reference>
<reference key="2">
    <citation type="journal article" date="2007" name="J. Virol.">
        <title>Complete genome analysis of 33 ecologically and biologically diverse Rift Valley fever virus strains reveals widespread virus movement and low genetic diversity due to recent common ancestry.</title>
        <authorList>
            <person name="Bird B.H."/>
            <person name="Khristova M.L."/>
            <person name="Rollin P.E."/>
            <person name="Ksiazek T.G."/>
            <person name="Nichol S.T."/>
        </authorList>
    </citation>
    <scope>NUCLEOTIDE SEQUENCE [GENOMIC RNA]</scope>
    <source>
        <strain evidence="11">ZH-501</strain>
    </source>
</reference>
<reference key="3">
    <citation type="journal article" date="2010" name="Proc. Natl. Acad. Sci. U.S.A.">
        <title>Structure of the Rift Valley fever virus nucleocapsid protein reveals another architecture for RNA encapsidation.</title>
        <authorList>
            <person name="Raymond D.D."/>
            <person name="Piper M.E."/>
            <person name="Gerrard S.R."/>
            <person name="Smith J.L."/>
        </authorList>
    </citation>
    <scope>NUCLEOTIDE SEQUENCE [GENOMIC RNA]</scope>
</reference>
<reference key="4">
    <citation type="journal article" date="2011" name="J. Infect. Dis.">
        <title>Sequential Rift Valley fever outbreaks in eastern Africa caused by multiple lineages of the virus.</title>
        <authorList>
            <person name="Nderitu L."/>
            <person name="Lee J.S."/>
            <person name="Omolo J."/>
            <person name="Omulo S."/>
            <person name="O'Guinn M.L."/>
            <person name="Hightower A."/>
            <person name="Mosha F."/>
            <person name="Mohamed M."/>
            <person name="Munyua P."/>
            <person name="Nganga Z."/>
            <person name="Hiett K."/>
            <person name="Seal B."/>
            <person name="Feikin D.R."/>
            <person name="Breiman R.F."/>
            <person name="Njenga M.K."/>
        </authorList>
    </citation>
    <scope>NUCLEOTIDE SEQUENCE [GENOMIC RNA]</scope>
    <source>
        <strain evidence="13">KEN/Bar-032/07</strain>
    </source>
</reference>
<reference key="5">
    <citation type="journal article" date="2017" name="Crit. Rev. Microbiol.">
        <title>Bunyaviridae RdRps: structure, motifs, and RNA synthesis machinery.</title>
        <authorList>
            <person name="Amroun A."/>
            <person name="Priet S."/>
            <person name="de Lamballerie X."/>
            <person name="Querat G."/>
        </authorList>
    </citation>
    <scope>REVIEW</scope>
</reference>
<reference key="6">
    <citation type="journal article" date="2020" name="Trends Microbiol.">
        <title>The Cap-Snatching Mechanism of Bunyaviruses.</title>
        <authorList>
            <person name="Olschewski S."/>
            <person name="Cusack S."/>
            <person name="Rosenthal M."/>
        </authorList>
    </citation>
    <scope>REVIEW</scope>
</reference>
<reference evidence="14" key="7">
    <citation type="journal article" date="2019" name="PLoS Pathog.">
        <title>Structure of a functional cap-binding domain in Rift Valley fever virus L protein.</title>
        <authorList>
            <person name="Gogrefe N."/>
            <person name="Reindl S."/>
            <person name="Guenther S."/>
            <person name="Rosenthal M."/>
        </authorList>
    </citation>
    <scope>X-RAY CRYSTALLOGRAPHY (1.48 ANGSTROMS) OF 1706-1822 IN COMPLEX WITH 7N-METHYL-8-HYDROGUANOSINE-5'-TRIPHOSPHATE</scope>
    <scope>DOMAIN</scope>
    <source>
        <strain evidence="9">ZH-501</strain>
    </source>
</reference>
<protein>
    <recommendedName>
        <fullName>RNA-directed RNA polymerase L</fullName>
        <shortName>Protein L</shortName>
        <ecNumber evidence="2">2.7.7.48</ecNumber>
    </recommendedName>
    <alternativeName>
        <fullName>Large structural protein</fullName>
    </alternativeName>
    <alternativeName>
        <fullName>Replicase</fullName>
    </alternativeName>
    <alternativeName>
        <fullName>Transcriptase</fullName>
    </alternativeName>
    <domain>
        <recommendedName>
            <fullName>cap-snatching endonuclease</fullName>
            <ecNumber evidence="2">3.1.-.-</ecNumber>
        </recommendedName>
    </domain>
</protein>
<keyword id="KW-0002">3D-structure</keyword>
<keyword id="KW-1038">Host endoplasmic reticulum</keyword>
<keyword id="KW-1040">Host Golgi apparatus</keyword>
<keyword id="KW-0378">Hydrolase</keyword>
<keyword id="KW-0460">Magnesium</keyword>
<keyword id="KW-0464">Manganese</keyword>
<keyword id="KW-0479">Metal-binding</keyword>
<keyword id="KW-0808">Transferase</keyword>
<keyword id="KW-0946">Virion</keyword>
<name>L_RVFV</name>